<dbReference type="EMBL" id="CP001614">
    <property type="protein sequence ID" value="ACR11719.1"/>
    <property type="molecule type" value="Genomic_DNA"/>
</dbReference>
<dbReference type="RefSeq" id="WP_015817830.1">
    <property type="nucleotide sequence ID" value="NC_012997.1"/>
</dbReference>
<dbReference type="SMR" id="C5BN48"/>
<dbReference type="STRING" id="377629.TERTU_0550"/>
<dbReference type="KEGG" id="ttu:TERTU_0550"/>
<dbReference type="eggNOG" id="COG0359">
    <property type="taxonomic scope" value="Bacteria"/>
</dbReference>
<dbReference type="HOGENOM" id="CLU_078938_4_1_6"/>
<dbReference type="OrthoDB" id="9788336at2"/>
<dbReference type="Proteomes" id="UP000009080">
    <property type="component" value="Chromosome"/>
</dbReference>
<dbReference type="GO" id="GO:1990904">
    <property type="term" value="C:ribonucleoprotein complex"/>
    <property type="evidence" value="ECO:0007669"/>
    <property type="project" value="UniProtKB-KW"/>
</dbReference>
<dbReference type="GO" id="GO:0005840">
    <property type="term" value="C:ribosome"/>
    <property type="evidence" value="ECO:0007669"/>
    <property type="project" value="UniProtKB-KW"/>
</dbReference>
<dbReference type="GO" id="GO:0019843">
    <property type="term" value="F:rRNA binding"/>
    <property type="evidence" value="ECO:0007669"/>
    <property type="project" value="UniProtKB-UniRule"/>
</dbReference>
<dbReference type="GO" id="GO:0003735">
    <property type="term" value="F:structural constituent of ribosome"/>
    <property type="evidence" value="ECO:0007669"/>
    <property type="project" value="InterPro"/>
</dbReference>
<dbReference type="GO" id="GO:0006412">
    <property type="term" value="P:translation"/>
    <property type="evidence" value="ECO:0007669"/>
    <property type="project" value="UniProtKB-UniRule"/>
</dbReference>
<dbReference type="Gene3D" id="3.10.430.100">
    <property type="entry name" value="Ribosomal protein L9, C-terminal domain"/>
    <property type="match status" value="1"/>
</dbReference>
<dbReference type="Gene3D" id="3.40.5.10">
    <property type="entry name" value="Ribosomal protein L9, N-terminal domain"/>
    <property type="match status" value="1"/>
</dbReference>
<dbReference type="HAMAP" id="MF_00503">
    <property type="entry name" value="Ribosomal_bL9"/>
    <property type="match status" value="1"/>
</dbReference>
<dbReference type="InterPro" id="IPR000244">
    <property type="entry name" value="Ribosomal_bL9"/>
</dbReference>
<dbReference type="InterPro" id="IPR009027">
    <property type="entry name" value="Ribosomal_bL9/RNase_H1_N"/>
</dbReference>
<dbReference type="InterPro" id="IPR020594">
    <property type="entry name" value="Ribosomal_bL9_bac/chp"/>
</dbReference>
<dbReference type="InterPro" id="IPR020069">
    <property type="entry name" value="Ribosomal_bL9_C"/>
</dbReference>
<dbReference type="InterPro" id="IPR036791">
    <property type="entry name" value="Ribosomal_bL9_C_sf"/>
</dbReference>
<dbReference type="InterPro" id="IPR020070">
    <property type="entry name" value="Ribosomal_bL9_N"/>
</dbReference>
<dbReference type="InterPro" id="IPR036935">
    <property type="entry name" value="Ribosomal_bL9_N_sf"/>
</dbReference>
<dbReference type="NCBIfam" id="TIGR00158">
    <property type="entry name" value="L9"/>
    <property type="match status" value="1"/>
</dbReference>
<dbReference type="PANTHER" id="PTHR21368">
    <property type="entry name" value="50S RIBOSOMAL PROTEIN L9"/>
    <property type="match status" value="1"/>
</dbReference>
<dbReference type="Pfam" id="PF03948">
    <property type="entry name" value="Ribosomal_L9_C"/>
    <property type="match status" value="1"/>
</dbReference>
<dbReference type="Pfam" id="PF01281">
    <property type="entry name" value="Ribosomal_L9_N"/>
    <property type="match status" value="1"/>
</dbReference>
<dbReference type="SUPFAM" id="SSF55658">
    <property type="entry name" value="L9 N-domain-like"/>
    <property type="match status" value="1"/>
</dbReference>
<dbReference type="SUPFAM" id="SSF55653">
    <property type="entry name" value="Ribosomal protein L9 C-domain"/>
    <property type="match status" value="1"/>
</dbReference>
<dbReference type="PROSITE" id="PS00651">
    <property type="entry name" value="RIBOSOMAL_L9"/>
    <property type="match status" value="1"/>
</dbReference>
<evidence type="ECO:0000255" key="1">
    <source>
        <dbReference type="HAMAP-Rule" id="MF_00503"/>
    </source>
</evidence>
<evidence type="ECO:0000305" key="2"/>
<comment type="function">
    <text evidence="1">Binds to the 23S rRNA.</text>
</comment>
<comment type="similarity">
    <text evidence="1">Belongs to the bacterial ribosomal protein bL9 family.</text>
</comment>
<keyword id="KW-1185">Reference proteome</keyword>
<keyword id="KW-0687">Ribonucleoprotein</keyword>
<keyword id="KW-0689">Ribosomal protein</keyword>
<keyword id="KW-0694">RNA-binding</keyword>
<keyword id="KW-0699">rRNA-binding</keyword>
<organism>
    <name type="scientific">Teredinibacter turnerae (strain ATCC 39867 / T7901)</name>
    <dbReference type="NCBI Taxonomy" id="377629"/>
    <lineage>
        <taxon>Bacteria</taxon>
        <taxon>Pseudomonadati</taxon>
        <taxon>Pseudomonadota</taxon>
        <taxon>Gammaproteobacteria</taxon>
        <taxon>Cellvibrionales</taxon>
        <taxon>Cellvibrionaceae</taxon>
        <taxon>Teredinibacter</taxon>
    </lineage>
</organism>
<feature type="chain" id="PRO_1000206563" description="Large ribosomal subunit protein bL9">
    <location>
        <begin position="1"/>
        <end position="149"/>
    </location>
</feature>
<name>RL9_TERTT</name>
<gene>
    <name evidence="1" type="primary">rplI</name>
    <name type="ordered locus">TERTU_0550</name>
</gene>
<proteinExistence type="inferred from homology"/>
<protein>
    <recommendedName>
        <fullName evidence="1">Large ribosomal subunit protein bL9</fullName>
    </recommendedName>
    <alternativeName>
        <fullName evidence="2">50S ribosomal protein L9</fullName>
    </alternativeName>
</protein>
<sequence length="149" mass="15865">MEVILLEKVGKLGTVGDKVKVKAGFGRNYLVPQGKAIAATESNIAEFEARRAELEAAASDRRTAAEGRAKLLAEKETFTIVAKTGDEGKLFGSVGTRDIADAITADGIKVSKAEVKLPQGTLREVGEYEVDIQLHVDVTQAIKLVIAAE</sequence>
<reference key="1">
    <citation type="journal article" date="2009" name="PLoS ONE">
        <title>The complete genome of Teredinibacter turnerae T7901: an intracellular endosymbiont of marine wood-boring bivalves (shipworms).</title>
        <authorList>
            <person name="Yang J.C."/>
            <person name="Madupu R."/>
            <person name="Durkin A.S."/>
            <person name="Ekborg N.A."/>
            <person name="Pedamallu C.S."/>
            <person name="Hostetler J.B."/>
            <person name="Radune D."/>
            <person name="Toms B.S."/>
            <person name="Henrissat B."/>
            <person name="Coutinho P.M."/>
            <person name="Schwarz S."/>
            <person name="Field L."/>
            <person name="Trindade-Silva A.E."/>
            <person name="Soares C.A.G."/>
            <person name="Elshahawi S."/>
            <person name="Hanora A."/>
            <person name="Schmidt E.W."/>
            <person name="Haygood M.G."/>
            <person name="Posfai J."/>
            <person name="Benner J."/>
            <person name="Madinger C."/>
            <person name="Nove J."/>
            <person name="Anton B."/>
            <person name="Chaudhary K."/>
            <person name="Foster J."/>
            <person name="Holman A."/>
            <person name="Kumar S."/>
            <person name="Lessard P.A."/>
            <person name="Luyten Y.A."/>
            <person name="Slatko B."/>
            <person name="Wood N."/>
            <person name="Wu B."/>
            <person name="Teplitski M."/>
            <person name="Mougous J.D."/>
            <person name="Ward N."/>
            <person name="Eisen J.A."/>
            <person name="Badger J.H."/>
            <person name="Distel D.L."/>
        </authorList>
    </citation>
    <scope>NUCLEOTIDE SEQUENCE [LARGE SCALE GENOMIC DNA]</scope>
    <source>
        <strain>ATCC 39867 / T7901</strain>
    </source>
</reference>
<accession>C5BN48</accession>